<gene>
    <name evidence="2" type="primary">nuoB</name>
    <name type="ordered locus">RT0345</name>
</gene>
<comment type="function">
    <text evidence="1">NDH-1 shuttles electrons from NADH, via FMN and iron-sulfur (Fe-S) centers, to quinones in the respiratory chain. Couples the redox reaction to proton translocation (for every two electrons transferred, four hydrogen ions are translocated across the cytoplasmic membrane), and thus conserves the redox energy in a proton gradient (By similarity).</text>
</comment>
<comment type="catalytic activity">
    <reaction evidence="2">
        <text>a quinone + NADH + 5 H(+)(in) = a quinol + NAD(+) + 4 H(+)(out)</text>
        <dbReference type="Rhea" id="RHEA:57888"/>
        <dbReference type="ChEBI" id="CHEBI:15378"/>
        <dbReference type="ChEBI" id="CHEBI:24646"/>
        <dbReference type="ChEBI" id="CHEBI:57540"/>
        <dbReference type="ChEBI" id="CHEBI:57945"/>
        <dbReference type="ChEBI" id="CHEBI:132124"/>
    </reaction>
</comment>
<comment type="cofactor">
    <cofactor evidence="2">
        <name>[4Fe-4S] cluster</name>
        <dbReference type="ChEBI" id="CHEBI:49883"/>
    </cofactor>
    <text evidence="2">Binds 1 [4Fe-4S] cluster.</text>
</comment>
<comment type="subunit">
    <text evidence="2">NDH-1 is composed of 14 different subunits. Subunits NuoB, C, D, E, F, and G constitute the peripheral sector of the complex.</text>
</comment>
<comment type="subcellular location">
    <subcellularLocation>
        <location evidence="2">Cell inner membrane</location>
        <topology evidence="2">Peripheral membrane protein</topology>
        <orientation evidence="2">Cytoplasmic side</orientation>
    </subcellularLocation>
</comment>
<comment type="similarity">
    <text evidence="2">Belongs to the complex I 20 kDa subunit family.</text>
</comment>
<name>NUOB_RICTY</name>
<organism>
    <name type="scientific">Rickettsia typhi (strain ATCC VR-144 / Wilmington)</name>
    <dbReference type="NCBI Taxonomy" id="257363"/>
    <lineage>
        <taxon>Bacteria</taxon>
        <taxon>Pseudomonadati</taxon>
        <taxon>Pseudomonadota</taxon>
        <taxon>Alphaproteobacteria</taxon>
        <taxon>Rickettsiales</taxon>
        <taxon>Rickettsiaceae</taxon>
        <taxon>Rickettsieae</taxon>
        <taxon>Rickettsia</taxon>
        <taxon>typhus group</taxon>
    </lineage>
</organism>
<evidence type="ECO:0000250" key="1"/>
<evidence type="ECO:0000255" key="2">
    <source>
        <dbReference type="HAMAP-Rule" id="MF_01356"/>
    </source>
</evidence>
<reference key="1">
    <citation type="journal article" date="2004" name="J. Bacteriol.">
        <title>Complete genome sequence of Rickettsia typhi and comparison with sequences of other Rickettsiae.</title>
        <authorList>
            <person name="McLeod M.P."/>
            <person name="Qin X."/>
            <person name="Karpathy S.E."/>
            <person name="Gioia J."/>
            <person name="Highlander S.K."/>
            <person name="Fox G.E."/>
            <person name="McNeill T.Z."/>
            <person name="Jiang H."/>
            <person name="Muzny D."/>
            <person name="Jacob L.S."/>
            <person name="Hawes A.C."/>
            <person name="Sodergren E."/>
            <person name="Gill R."/>
            <person name="Hume J."/>
            <person name="Morgan M."/>
            <person name="Fan G."/>
            <person name="Amin A.G."/>
            <person name="Gibbs R.A."/>
            <person name="Hong C."/>
            <person name="Yu X.-J."/>
            <person name="Walker D.H."/>
            <person name="Weinstock G.M."/>
        </authorList>
    </citation>
    <scope>NUCLEOTIDE SEQUENCE [LARGE SCALE GENOMIC DNA]</scope>
    <source>
        <strain>ATCC VR-144 / Wilmington</strain>
    </source>
</reference>
<feature type="chain" id="PRO_0000287853" description="NADH-quinone oxidoreductase subunit B">
    <location>
        <begin position="1"/>
        <end position="171"/>
    </location>
</feature>
<feature type="binding site" evidence="2">
    <location>
        <position position="47"/>
    </location>
    <ligand>
        <name>[4Fe-4S] cluster</name>
        <dbReference type="ChEBI" id="CHEBI:49883"/>
    </ligand>
</feature>
<feature type="binding site" evidence="2">
    <location>
        <position position="48"/>
    </location>
    <ligand>
        <name>[4Fe-4S] cluster</name>
        <dbReference type="ChEBI" id="CHEBI:49883"/>
    </ligand>
</feature>
<feature type="binding site" evidence="2">
    <location>
        <position position="112"/>
    </location>
    <ligand>
        <name>[4Fe-4S] cluster</name>
        <dbReference type="ChEBI" id="CHEBI:49883"/>
    </ligand>
</feature>
<feature type="binding site" evidence="2">
    <location>
        <position position="142"/>
    </location>
    <ligand>
        <name>[4Fe-4S] cluster</name>
        <dbReference type="ChEBI" id="CHEBI:49883"/>
    </ligand>
</feature>
<sequence>MKNDFYQEDELLNSCLTNRGFLLSKIDEVISWARANSLWPMTFGLACCAVEMMQAAASRYDMDRFGMLFRPSPRQSDLMIVAGTLTNKMAPALRKVYDQMTEPKWVLSMGSCANGGGYYHFSYSVVRGCDRIVPVDVYVPGCPPTAEALIYGLMQLQKKIKRTTGFKYDSR</sequence>
<protein>
    <recommendedName>
        <fullName evidence="2">NADH-quinone oxidoreductase subunit B</fullName>
        <ecNumber evidence="2">7.1.1.-</ecNumber>
    </recommendedName>
    <alternativeName>
        <fullName evidence="2">NADH dehydrogenase I subunit B</fullName>
    </alternativeName>
    <alternativeName>
        <fullName evidence="2">NDH-1 subunit B</fullName>
    </alternativeName>
</protein>
<dbReference type="EC" id="7.1.1.-" evidence="2"/>
<dbReference type="EMBL" id="AE017197">
    <property type="protein sequence ID" value="AAU03825.1"/>
    <property type="molecule type" value="Genomic_DNA"/>
</dbReference>
<dbReference type="RefSeq" id="WP_011190809.1">
    <property type="nucleotide sequence ID" value="NC_006142.1"/>
</dbReference>
<dbReference type="SMR" id="Q68X17"/>
<dbReference type="KEGG" id="rty:RT0345"/>
<dbReference type="eggNOG" id="COG0377">
    <property type="taxonomic scope" value="Bacteria"/>
</dbReference>
<dbReference type="HOGENOM" id="CLU_055737_7_3_5"/>
<dbReference type="OrthoDB" id="9786737at2"/>
<dbReference type="Proteomes" id="UP000000604">
    <property type="component" value="Chromosome"/>
</dbReference>
<dbReference type="GO" id="GO:0005886">
    <property type="term" value="C:plasma membrane"/>
    <property type="evidence" value="ECO:0007669"/>
    <property type="project" value="UniProtKB-SubCell"/>
</dbReference>
<dbReference type="GO" id="GO:0045271">
    <property type="term" value="C:respiratory chain complex I"/>
    <property type="evidence" value="ECO:0007669"/>
    <property type="project" value="TreeGrafter"/>
</dbReference>
<dbReference type="GO" id="GO:0051539">
    <property type="term" value="F:4 iron, 4 sulfur cluster binding"/>
    <property type="evidence" value="ECO:0007669"/>
    <property type="project" value="UniProtKB-KW"/>
</dbReference>
<dbReference type="GO" id="GO:0005506">
    <property type="term" value="F:iron ion binding"/>
    <property type="evidence" value="ECO:0007669"/>
    <property type="project" value="UniProtKB-UniRule"/>
</dbReference>
<dbReference type="GO" id="GO:0008137">
    <property type="term" value="F:NADH dehydrogenase (ubiquinone) activity"/>
    <property type="evidence" value="ECO:0007669"/>
    <property type="project" value="InterPro"/>
</dbReference>
<dbReference type="GO" id="GO:0050136">
    <property type="term" value="F:NADH:ubiquinone reductase (non-electrogenic) activity"/>
    <property type="evidence" value="ECO:0007669"/>
    <property type="project" value="UniProtKB-UniRule"/>
</dbReference>
<dbReference type="GO" id="GO:0048038">
    <property type="term" value="F:quinone binding"/>
    <property type="evidence" value="ECO:0007669"/>
    <property type="project" value="UniProtKB-KW"/>
</dbReference>
<dbReference type="GO" id="GO:0009060">
    <property type="term" value="P:aerobic respiration"/>
    <property type="evidence" value="ECO:0007669"/>
    <property type="project" value="TreeGrafter"/>
</dbReference>
<dbReference type="GO" id="GO:0015990">
    <property type="term" value="P:electron transport coupled proton transport"/>
    <property type="evidence" value="ECO:0007669"/>
    <property type="project" value="TreeGrafter"/>
</dbReference>
<dbReference type="FunFam" id="3.40.50.12280:FF:000001">
    <property type="entry name" value="NADH-quinone oxidoreductase subunit B 2"/>
    <property type="match status" value="1"/>
</dbReference>
<dbReference type="Gene3D" id="3.40.50.12280">
    <property type="match status" value="1"/>
</dbReference>
<dbReference type="HAMAP" id="MF_01356">
    <property type="entry name" value="NDH1_NuoB"/>
    <property type="match status" value="1"/>
</dbReference>
<dbReference type="InterPro" id="IPR006137">
    <property type="entry name" value="NADH_UbQ_OxRdtase-like_20kDa"/>
</dbReference>
<dbReference type="InterPro" id="IPR006138">
    <property type="entry name" value="NADH_UQ_OxRdtase_20Kd_su"/>
</dbReference>
<dbReference type="NCBIfam" id="TIGR01957">
    <property type="entry name" value="nuoB_fam"/>
    <property type="match status" value="1"/>
</dbReference>
<dbReference type="NCBIfam" id="NF005012">
    <property type="entry name" value="PRK06411.1"/>
    <property type="match status" value="1"/>
</dbReference>
<dbReference type="PANTHER" id="PTHR11995">
    <property type="entry name" value="NADH DEHYDROGENASE"/>
    <property type="match status" value="1"/>
</dbReference>
<dbReference type="PANTHER" id="PTHR11995:SF14">
    <property type="entry name" value="NADH DEHYDROGENASE [UBIQUINONE] IRON-SULFUR PROTEIN 7, MITOCHONDRIAL"/>
    <property type="match status" value="1"/>
</dbReference>
<dbReference type="Pfam" id="PF01058">
    <property type="entry name" value="Oxidored_q6"/>
    <property type="match status" value="1"/>
</dbReference>
<dbReference type="SUPFAM" id="SSF56770">
    <property type="entry name" value="HydA/Nqo6-like"/>
    <property type="match status" value="1"/>
</dbReference>
<dbReference type="PROSITE" id="PS01150">
    <property type="entry name" value="COMPLEX1_20K"/>
    <property type="match status" value="1"/>
</dbReference>
<accession>Q68X17</accession>
<keyword id="KW-0004">4Fe-4S</keyword>
<keyword id="KW-0997">Cell inner membrane</keyword>
<keyword id="KW-1003">Cell membrane</keyword>
<keyword id="KW-0408">Iron</keyword>
<keyword id="KW-0411">Iron-sulfur</keyword>
<keyword id="KW-0472">Membrane</keyword>
<keyword id="KW-0479">Metal-binding</keyword>
<keyword id="KW-0520">NAD</keyword>
<keyword id="KW-0874">Quinone</keyword>
<keyword id="KW-1278">Translocase</keyword>
<keyword id="KW-0813">Transport</keyword>
<keyword id="KW-0830">Ubiquinone</keyword>
<proteinExistence type="inferred from homology"/>